<accession>P51981</accession>
<accession>P51982</accession>
<accession>P76048</accession>
<accession>P77345</accession>
<gene>
    <name type="primary">ycjG</name>
    <name type="synonym">ycjH</name>
    <name type="ordered locus">b1325</name>
    <name type="ordered locus">JW1318</name>
</gene>
<protein>
    <recommendedName>
        <fullName>L-Ala-D/L-Glu epimerase</fullName>
        <shortName>AE epimerase</shortName>
        <shortName>AEE</shortName>
        <ecNumber evidence="2">5.1.1.20</ecNumber>
    </recommendedName>
</protein>
<dbReference type="EC" id="5.1.1.20" evidence="2"/>
<dbReference type="EMBL" id="U33213">
    <property type="status" value="NOT_ANNOTATED_CDS"/>
    <property type="molecule type" value="Genomic_DNA"/>
</dbReference>
<dbReference type="EMBL" id="U00096">
    <property type="protein sequence ID" value="AAC74407.2"/>
    <property type="molecule type" value="Genomic_DNA"/>
</dbReference>
<dbReference type="EMBL" id="AP009048">
    <property type="protein sequence ID" value="BAA14907.1"/>
    <property type="molecule type" value="Genomic_DNA"/>
</dbReference>
<dbReference type="PIR" id="H64881">
    <property type="entry name" value="H64881"/>
</dbReference>
<dbReference type="RefSeq" id="NP_415841.4">
    <property type="nucleotide sequence ID" value="NC_000913.3"/>
</dbReference>
<dbReference type="RefSeq" id="WP_001261211.1">
    <property type="nucleotide sequence ID" value="NZ_SSZK01000012.1"/>
</dbReference>
<dbReference type="PDB" id="1JPD">
    <property type="method" value="X-ray"/>
    <property type="resolution" value="2.60 A"/>
    <property type="chains" value="X=1-321"/>
</dbReference>
<dbReference type="PDBsum" id="1JPD"/>
<dbReference type="SMR" id="P51981"/>
<dbReference type="BioGRID" id="4260152">
    <property type="interactions" value="371"/>
</dbReference>
<dbReference type="FunCoup" id="P51981">
    <property type="interactions" value="116"/>
</dbReference>
<dbReference type="IntAct" id="P51981">
    <property type="interactions" value="1"/>
</dbReference>
<dbReference type="STRING" id="511145.b1325"/>
<dbReference type="jPOST" id="P51981"/>
<dbReference type="PaxDb" id="511145-b1325"/>
<dbReference type="EnsemblBacteria" id="AAC74407">
    <property type="protein sequence ID" value="AAC74407"/>
    <property type="gene ID" value="b1325"/>
</dbReference>
<dbReference type="GeneID" id="946013"/>
<dbReference type="KEGG" id="ecj:JW1318"/>
<dbReference type="KEGG" id="eco:b1325"/>
<dbReference type="KEGG" id="ecoc:C3026_07755"/>
<dbReference type="PATRIC" id="fig|1411691.4.peg.953"/>
<dbReference type="EchoBASE" id="EB3018"/>
<dbReference type="eggNOG" id="COG4948">
    <property type="taxonomic scope" value="Bacteria"/>
</dbReference>
<dbReference type="HOGENOM" id="CLU_030273_4_3_6"/>
<dbReference type="InParanoid" id="P51981"/>
<dbReference type="OMA" id="YDAINIK"/>
<dbReference type="OrthoDB" id="9782675at2"/>
<dbReference type="PhylomeDB" id="P51981"/>
<dbReference type="BioCyc" id="EcoCyc:G6661-MONOMER"/>
<dbReference type="BioCyc" id="MetaCyc:G6661-MONOMER"/>
<dbReference type="BRENDA" id="5.1.1.20">
    <property type="organism ID" value="2026"/>
</dbReference>
<dbReference type="SABIO-RK" id="P51981"/>
<dbReference type="UniPathway" id="UPA00544"/>
<dbReference type="EvolutionaryTrace" id="P51981"/>
<dbReference type="PRO" id="PR:P51981"/>
<dbReference type="Proteomes" id="UP000000625">
    <property type="component" value="Chromosome"/>
</dbReference>
<dbReference type="GO" id="GO:0103031">
    <property type="term" value="F:L-Ala-D/L-Glu epimerase activity"/>
    <property type="evidence" value="ECO:0007669"/>
    <property type="project" value="UniProtKB-EC"/>
</dbReference>
<dbReference type="GO" id="GO:0046872">
    <property type="term" value="F:metal ion binding"/>
    <property type="evidence" value="ECO:0007669"/>
    <property type="project" value="UniProtKB-KW"/>
</dbReference>
<dbReference type="GO" id="GO:0016854">
    <property type="term" value="F:racemase and epimerase activity"/>
    <property type="evidence" value="ECO:0000318"/>
    <property type="project" value="GO_Central"/>
</dbReference>
<dbReference type="GO" id="GO:0016855">
    <property type="term" value="F:racemase and epimerase activity, acting on amino acids and derivatives"/>
    <property type="evidence" value="ECO:0000314"/>
    <property type="project" value="EcoCyc"/>
</dbReference>
<dbReference type="GO" id="GO:0009063">
    <property type="term" value="P:amino acid catabolic process"/>
    <property type="evidence" value="ECO:0007669"/>
    <property type="project" value="InterPro"/>
</dbReference>
<dbReference type="GO" id="GO:0071555">
    <property type="term" value="P:cell wall organization"/>
    <property type="evidence" value="ECO:0007669"/>
    <property type="project" value="UniProtKB-KW"/>
</dbReference>
<dbReference type="GO" id="GO:0006518">
    <property type="term" value="P:peptide metabolic process"/>
    <property type="evidence" value="ECO:0000318"/>
    <property type="project" value="GO_Central"/>
</dbReference>
<dbReference type="GO" id="GO:0009254">
    <property type="term" value="P:peptidoglycan turnover"/>
    <property type="evidence" value="ECO:0007669"/>
    <property type="project" value="UniProtKB-UniPathway"/>
</dbReference>
<dbReference type="CDD" id="cd03319">
    <property type="entry name" value="L-Ala-DL-Glu_epimerase"/>
    <property type="match status" value="1"/>
</dbReference>
<dbReference type="FunFam" id="3.20.20.120:FF:000010">
    <property type="entry name" value="Dipeptide epimerase"/>
    <property type="match status" value="1"/>
</dbReference>
<dbReference type="FunFam" id="3.30.390.10:FF:000010">
    <property type="entry name" value="Dipeptide epimerase"/>
    <property type="match status" value="1"/>
</dbReference>
<dbReference type="Gene3D" id="3.20.20.120">
    <property type="entry name" value="Enolase-like C-terminal domain"/>
    <property type="match status" value="1"/>
</dbReference>
<dbReference type="Gene3D" id="3.30.390.10">
    <property type="entry name" value="Enolase-like, N-terminal domain"/>
    <property type="match status" value="1"/>
</dbReference>
<dbReference type="InterPro" id="IPR034593">
    <property type="entry name" value="DgoD-like"/>
</dbReference>
<dbReference type="InterPro" id="IPR034603">
    <property type="entry name" value="Dipeptide_epimerase"/>
</dbReference>
<dbReference type="InterPro" id="IPR036849">
    <property type="entry name" value="Enolase-like_C_sf"/>
</dbReference>
<dbReference type="InterPro" id="IPR029017">
    <property type="entry name" value="Enolase-like_N"/>
</dbReference>
<dbReference type="InterPro" id="IPR029065">
    <property type="entry name" value="Enolase_C-like"/>
</dbReference>
<dbReference type="InterPro" id="IPR018110">
    <property type="entry name" value="Mandel_Rmase/mucon_lact_enz_CS"/>
</dbReference>
<dbReference type="InterPro" id="IPR013342">
    <property type="entry name" value="Mandelate_racemase_C"/>
</dbReference>
<dbReference type="InterPro" id="IPR013341">
    <property type="entry name" value="Mandelate_racemase_N_dom"/>
</dbReference>
<dbReference type="NCBIfam" id="NF011708">
    <property type="entry name" value="PRK15129.1"/>
    <property type="match status" value="1"/>
</dbReference>
<dbReference type="NCBIfam" id="NF042940">
    <property type="entry name" value="racemase_DgcA"/>
    <property type="match status" value="1"/>
</dbReference>
<dbReference type="PANTHER" id="PTHR48080">
    <property type="entry name" value="D-GALACTONATE DEHYDRATASE-RELATED"/>
    <property type="match status" value="1"/>
</dbReference>
<dbReference type="PANTHER" id="PTHR48080:SF3">
    <property type="entry name" value="ENOLASE SUPERFAMILY MEMBER DDB_G0284701"/>
    <property type="match status" value="1"/>
</dbReference>
<dbReference type="Pfam" id="PF13378">
    <property type="entry name" value="MR_MLE_C"/>
    <property type="match status" value="1"/>
</dbReference>
<dbReference type="Pfam" id="PF02746">
    <property type="entry name" value="MR_MLE_N"/>
    <property type="match status" value="1"/>
</dbReference>
<dbReference type="SFLD" id="SFLDF00010">
    <property type="entry name" value="dipeptide_epimerase"/>
    <property type="match status" value="1"/>
</dbReference>
<dbReference type="SFLD" id="SFLDG00180">
    <property type="entry name" value="muconate_cycloisomerase"/>
    <property type="match status" value="1"/>
</dbReference>
<dbReference type="SMART" id="SM00922">
    <property type="entry name" value="MR_MLE"/>
    <property type="match status" value="1"/>
</dbReference>
<dbReference type="SUPFAM" id="SSF51604">
    <property type="entry name" value="Enolase C-terminal domain-like"/>
    <property type="match status" value="1"/>
</dbReference>
<dbReference type="SUPFAM" id="SSF54826">
    <property type="entry name" value="Enolase N-terminal domain-like"/>
    <property type="match status" value="1"/>
</dbReference>
<dbReference type="PROSITE" id="PS00908">
    <property type="entry name" value="MR_MLE_1"/>
    <property type="match status" value="1"/>
</dbReference>
<dbReference type="PROSITE" id="PS00909">
    <property type="entry name" value="MR_MLE_2"/>
    <property type="match status" value="1"/>
</dbReference>
<keyword id="KW-0002">3D-structure</keyword>
<keyword id="KW-0961">Cell wall biogenesis/degradation</keyword>
<keyword id="KW-0413">Isomerase</keyword>
<keyword id="KW-0460">Magnesium</keyword>
<keyword id="KW-0479">Metal-binding</keyword>
<keyword id="KW-1185">Reference proteome</keyword>
<feature type="chain" id="PRO_0000171261" description="L-Ala-D/L-Glu epimerase">
    <location>
        <begin position="1"/>
        <end position="321"/>
    </location>
</feature>
<feature type="active site" description="Proton acceptor; specific for (R)-substrate epimerization" evidence="1">
    <location>
        <position position="151"/>
    </location>
</feature>
<feature type="active site" description="Proton acceptor; specific for (S)-substrate epimerization" evidence="1">
    <location>
        <position position="247"/>
    </location>
</feature>
<feature type="binding site" evidence="1">
    <location>
        <position position="124"/>
    </location>
    <ligand>
        <name>substrate</name>
    </ligand>
</feature>
<feature type="binding site" evidence="1">
    <location>
        <position position="149"/>
    </location>
    <ligand>
        <name>substrate</name>
    </ligand>
</feature>
<feature type="binding site" evidence="1">
    <location>
        <position position="176"/>
    </location>
    <ligand>
        <name>Mg(2+)</name>
        <dbReference type="ChEBI" id="CHEBI:18420"/>
    </ligand>
</feature>
<feature type="binding site" evidence="1">
    <location>
        <position position="202"/>
    </location>
    <ligand>
        <name>Mg(2+)</name>
        <dbReference type="ChEBI" id="CHEBI:18420"/>
    </ligand>
</feature>
<feature type="binding site" evidence="1">
    <location>
        <position position="225"/>
    </location>
    <ligand>
        <name>Mg(2+)</name>
        <dbReference type="ChEBI" id="CHEBI:18420"/>
    </ligand>
</feature>
<feature type="binding site" evidence="1">
    <location>
        <position position="275"/>
    </location>
    <ligand>
        <name>substrate</name>
    </ligand>
</feature>
<feature type="binding site" evidence="1">
    <location>
        <position position="297"/>
    </location>
    <ligand>
        <name>substrate</name>
    </ligand>
</feature>
<feature type="binding site" evidence="1">
    <location>
        <position position="299"/>
    </location>
    <ligand>
        <name>substrate</name>
    </ligand>
</feature>
<feature type="sequence conflict" description="In Ref. 1; U33213." evidence="5" ref="1">
    <original>A</original>
    <variation>R</variation>
    <location>
        <position position="236"/>
    </location>
</feature>
<feature type="sequence conflict" description="In Ref. 1; U33213." evidence="5" ref="1">
    <original>V</original>
    <variation>I</variation>
    <location>
        <position position="244"/>
    </location>
</feature>
<feature type="sequence conflict" description="In Ref. 1; U33213." evidence="5" ref="1">
    <location>
        <position position="257"/>
    </location>
</feature>
<feature type="sequence conflict" description="In Ref. 1; U33213." evidence="5" ref="1">
    <original>A</original>
    <variation>G</variation>
    <location>
        <position position="259"/>
    </location>
</feature>
<feature type="sequence conflict" description="In Ref. 1; U33213." evidence="5" ref="1">
    <original>P</original>
    <variation>S</variation>
    <location>
        <position position="301"/>
    </location>
</feature>
<feature type="strand" evidence="6">
    <location>
        <begin position="3"/>
        <end position="14"/>
    </location>
</feature>
<feature type="strand" evidence="6">
    <location>
        <begin position="25"/>
        <end position="36"/>
    </location>
</feature>
<feature type="strand" evidence="6">
    <location>
        <begin position="39"/>
        <end position="45"/>
    </location>
</feature>
<feature type="helix" evidence="6">
    <location>
        <begin position="49"/>
        <end position="51"/>
    </location>
</feature>
<feature type="helix" evidence="6">
    <location>
        <begin position="55"/>
        <end position="63"/>
    </location>
</feature>
<feature type="helix" evidence="6">
    <location>
        <begin position="66"/>
        <end position="70"/>
    </location>
</feature>
<feature type="helix" evidence="6">
    <location>
        <begin position="75"/>
        <end position="81"/>
    </location>
</feature>
<feature type="helix" evidence="6">
    <location>
        <begin position="86"/>
        <end position="101"/>
    </location>
</feature>
<feature type="turn" evidence="6">
    <location>
        <begin position="102"/>
        <end position="104"/>
    </location>
</feature>
<feature type="helix" evidence="6">
    <location>
        <begin position="107"/>
        <end position="111"/>
    </location>
</feature>
<feature type="strand" evidence="6">
    <location>
        <begin position="117"/>
        <end position="121"/>
    </location>
</feature>
<feature type="strand" evidence="6">
    <location>
        <begin position="123"/>
        <end position="125"/>
    </location>
</feature>
<feature type="helix" evidence="6">
    <location>
        <begin position="130"/>
        <end position="142"/>
    </location>
</feature>
<feature type="strand" evidence="6">
    <location>
        <begin position="146"/>
        <end position="151"/>
    </location>
</feature>
<feature type="helix" evidence="6">
    <location>
        <begin position="157"/>
        <end position="167"/>
    </location>
</feature>
<feature type="strand" evidence="6">
    <location>
        <begin position="171"/>
        <end position="176"/>
    </location>
</feature>
<feature type="helix" evidence="6">
    <location>
        <begin position="186"/>
        <end position="195"/>
    </location>
</feature>
<feature type="strand" evidence="6">
    <location>
        <begin position="200"/>
        <end position="202"/>
    </location>
</feature>
<feature type="helix" evidence="6">
    <location>
        <begin position="211"/>
        <end position="214"/>
    </location>
</feature>
<feature type="strand" evidence="6">
    <location>
        <begin position="222"/>
        <end position="225"/>
    </location>
</feature>
<feature type="helix" evidence="6">
    <location>
        <begin position="231"/>
        <end position="233"/>
    </location>
</feature>
<feature type="helix" evidence="6">
    <location>
        <begin position="234"/>
        <end position="237"/>
    </location>
</feature>
<feature type="strand" evidence="6">
    <location>
        <begin position="241"/>
        <end position="246"/>
    </location>
</feature>
<feature type="helix" evidence="6">
    <location>
        <begin position="248"/>
        <end position="251"/>
    </location>
</feature>
<feature type="helix" evidence="6">
    <location>
        <begin position="254"/>
        <end position="266"/>
    </location>
</feature>
<feature type="strand" evidence="6">
    <location>
        <begin position="270"/>
        <end position="273"/>
    </location>
</feature>
<feature type="helix" evidence="6">
    <location>
        <begin position="280"/>
        <end position="286"/>
    </location>
</feature>
<feature type="helix" evidence="6">
    <location>
        <begin position="287"/>
        <end position="292"/>
    </location>
</feature>
<feature type="strand" evidence="6">
    <location>
        <begin position="294"/>
        <end position="296"/>
    </location>
</feature>
<feature type="helix" evidence="6">
    <location>
        <begin position="300"/>
        <end position="303"/>
    </location>
</feature>
<feature type="strand" evidence="6">
    <location>
        <begin position="304"/>
        <end position="306"/>
    </location>
</feature>
<feature type="strand" evidence="6">
    <location>
        <begin position="313"/>
        <end position="315"/>
    </location>
</feature>
<feature type="strand" evidence="6">
    <location>
        <begin position="318"/>
        <end position="320"/>
    </location>
</feature>
<evidence type="ECO:0000250" key="1"/>
<evidence type="ECO:0000269" key="2">
    <source>
    </source>
</evidence>
<evidence type="ECO:0000269" key="3">
    <source>
    </source>
</evidence>
<evidence type="ECO:0000269" key="4">
    <source>
    </source>
</evidence>
<evidence type="ECO:0000305" key="5"/>
<evidence type="ECO:0007829" key="6">
    <source>
        <dbReference type="PDB" id="1JPD"/>
    </source>
</evidence>
<comment type="function">
    <text evidence="2 4">Catalyzes the epimerization of L-Ala-D-Glu to L-Ala-L-Glu and has a role in the recycling of the murein peptide, of which L-Ala-D-Glu is a component. Is also able to catalyze the reverse reaction and the epimerization of all the L-Ala-X dipeptides, except L-Ala-L-Arg, L-Ala-L-Lys and L-Ala-L-Pro. Is also active with L-Gly-L-Glu, L-Phe-L-Glu, and L-Ser-L-Glu, but not with L-Glu-L-Glu, L-Lys-L-Glu, L-Pro-L-Glu, L-Lys-L-Ala, or D-Ala-D-Ala.</text>
</comment>
<comment type="catalytic activity">
    <reaction evidence="2">
        <text>L-alanyl-L-glutamate = L-alanyl-D-glutamate</text>
        <dbReference type="Rhea" id="RHEA:28394"/>
        <dbReference type="ChEBI" id="CHEBI:61395"/>
        <dbReference type="ChEBI" id="CHEBI:61396"/>
        <dbReference type="EC" id="5.1.1.20"/>
    </reaction>
</comment>
<comment type="cofactor">
    <cofactor evidence="1">
        <name>Mg(2+)</name>
        <dbReference type="ChEBI" id="CHEBI:18420"/>
    </cofactor>
    <text evidence="1">Binds 1 Mg(2+) ion per subunit.</text>
</comment>
<comment type="biophysicochemical properties">
    <kinetics>
        <KM evidence="2">0.13 mM for L-Ala-D-Glu (at pH 8.5)</KM>
        <KM evidence="2">0.19 mM for L-Ala-D-Asp (at pH 8.5)</KM>
        <KM evidence="2">0.69 mM for L-Ala-D-Met (at pH 8.5)</KM>
        <KM evidence="2">1.8 mM for L-Ala-D-Gln (at pH 8.5)</KM>
    </kinetics>
</comment>
<comment type="pathway">
    <text>Cell wall biogenesis; peptidoglycan recycling.</text>
</comment>
<comment type="subunit">
    <text evidence="3">Monomer.</text>
</comment>
<comment type="similarity">
    <text evidence="5">Belongs to the mandelate racemase/muconate lactonizing enzyme family.</text>
</comment>
<comment type="sequence caution" evidence="5">
    <conflict type="erroneous termination">
        <sequence resource="EMBL" id="U33213"/>
    </conflict>
    <text>Truncated C-terminus.</text>
</comment>
<comment type="sequence caution" evidence="5">
    <conflict type="frameshift">
        <sequence resource="EMBL" id="U33213"/>
    </conflict>
</comment>
<reference key="1">
    <citation type="journal article" date="1995" name="J. Biol. Chem.">
        <title>Thioredoxin-linked 'thiol peroxidase' from periplasmic space of Escherichia coli.</title>
        <authorList>
            <person name="Cha M.-K."/>
            <person name="Kim H.-K."/>
            <person name="Kim I.-H."/>
        </authorList>
    </citation>
    <scope>NUCLEOTIDE SEQUENCE [GENOMIC DNA]</scope>
    <source>
        <strain>K12</strain>
    </source>
</reference>
<reference key="2">
    <citation type="journal article" date="1996" name="DNA Res.">
        <title>A 570-kb DNA sequence of the Escherichia coli K-12 genome corresponding to the 28.0-40.1 min region on the linkage map.</title>
        <authorList>
            <person name="Aiba H."/>
            <person name="Baba T."/>
            <person name="Fujita K."/>
            <person name="Hayashi K."/>
            <person name="Inada T."/>
            <person name="Isono K."/>
            <person name="Itoh T."/>
            <person name="Kasai H."/>
            <person name="Kashimoto K."/>
            <person name="Kimura S."/>
            <person name="Kitakawa M."/>
            <person name="Kitagawa M."/>
            <person name="Makino K."/>
            <person name="Miki T."/>
            <person name="Mizobuchi K."/>
            <person name="Mori H."/>
            <person name="Mori T."/>
            <person name="Motomura K."/>
            <person name="Nakade S."/>
            <person name="Nakamura Y."/>
            <person name="Nashimoto H."/>
            <person name="Nishio Y."/>
            <person name="Oshima T."/>
            <person name="Saito N."/>
            <person name="Sampei G."/>
            <person name="Seki Y."/>
            <person name="Sivasundaram S."/>
            <person name="Tagami H."/>
            <person name="Takeda J."/>
            <person name="Takemoto K."/>
            <person name="Takeuchi Y."/>
            <person name="Wada C."/>
            <person name="Yamamoto Y."/>
            <person name="Horiuchi T."/>
        </authorList>
    </citation>
    <scope>NUCLEOTIDE SEQUENCE [LARGE SCALE GENOMIC DNA]</scope>
    <source>
        <strain>K12 / W3110 / ATCC 27325 / DSM 5911</strain>
    </source>
</reference>
<reference key="3">
    <citation type="journal article" date="1997" name="Science">
        <title>The complete genome sequence of Escherichia coli K-12.</title>
        <authorList>
            <person name="Blattner F.R."/>
            <person name="Plunkett G. III"/>
            <person name="Bloch C.A."/>
            <person name="Perna N.T."/>
            <person name="Burland V."/>
            <person name="Riley M."/>
            <person name="Collado-Vides J."/>
            <person name="Glasner J.D."/>
            <person name="Rode C.K."/>
            <person name="Mayhew G.F."/>
            <person name="Gregor J."/>
            <person name="Davis N.W."/>
            <person name="Kirkpatrick H.A."/>
            <person name="Goeden M.A."/>
            <person name="Rose D.J."/>
            <person name="Mau B."/>
            <person name="Shao Y."/>
        </authorList>
    </citation>
    <scope>NUCLEOTIDE SEQUENCE [LARGE SCALE GENOMIC DNA]</scope>
    <source>
        <strain>K12 / MG1655 / ATCC 47076</strain>
    </source>
</reference>
<reference key="4">
    <citation type="journal article" date="2006" name="Mol. Syst. Biol.">
        <title>Highly accurate genome sequences of Escherichia coli K-12 strains MG1655 and W3110.</title>
        <authorList>
            <person name="Hayashi K."/>
            <person name="Morooka N."/>
            <person name="Yamamoto Y."/>
            <person name="Fujita K."/>
            <person name="Isono K."/>
            <person name="Choi S."/>
            <person name="Ohtsubo E."/>
            <person name="Baba T."/>
            <person name="Wanner B.L."/>
            <person name="Mori H."/>
            <person name="Horiuchi T."/>
        </authorList>
    </citation>
    <scope>NUCLEOTIDE SEQUENCE [LARGE SCALE GENOMIC DNA]</scope>
    <source>
        <strain>K12 / W3110 / ATCC 27325 / DSM 5911</strain>
    </source>
</reference>
<reference key="5">
    <citation type="unpublished observations" date="1996-03">
        <authorList>
            <person name="Rudd K.E."/>
        </authorList>
    </citation>
    <scope>IDENTIFICATION</scope>
</reference>
<reference key="6">
    <citation type="journal article" date="2001" name="Biochemistry">
        <title>Evolution of enzymatic activities in the enolase superfamily: functional assignment of unknown proteins in Bacillus subtilis and Escherichia coli as L-Ala-D/L-Glu epimerases.</title>
        <authorList>
            <person name="Schmidt D.M.Z."/>
            <person name="Hubbard B.K."/>
            <person name="Gerlt J.A."/>
        </authorList>
    </citation>
    <scope>FUNCTION</scope>
    <scope>CATALYTIC ACTIVITY</scope>
    <scope>SUBSTRATE SPECIFICITY</scope>
    <scope>BIOPHYSICOCHEMICAL PROPERTIES</scope>
    <source>
        <strain>K12 / MG1655 / ATCC 47076</strain>
    </source>
</reference>
<reference key="7">
    <citation type="journal article" date="2008" name="Microbiol. Mol. Biol. Rev.">
        <title>How bacteria consume their own exoskeletons (turnover and recycling of cell wall peptidoglycan).</title>
        <authorList>
            <person name="Park J.T."/>
            <person name="Uehara T."/>
        </authorList>
    </citation>
    <scope>FUNCTION IN PEPTIDOGLYCAN RECYCLING</scope>
    <scope>REVIEW</scope>
</reference>
<reference key="8">
    <citation type="journal article" date="2001" name="Biochemistry">
        <title>Evolution of enzymatic activities in the enolase superfamily: crystal structures of the L-Ala-D/L-Glu epimerases from Escherichia coli and Bacillus subtilis.</title>
        <authorList>
            <person name="Gulick A.M."/>
            <person name="Schmidt D.M.Z."/>
            <person name="Gerlt J.A."/>
            <person name="Rayment I."/>
        </authorList>
    </citation>
    <scope>X-RAY CRYSTALLOGRAPHY (2.6 ANGSTROMS)</scope>
    <scope>SUBUNIT</scope>
    <source>
        <strain>K12 / MG1655 / ATCC 47076</strain>
    </source>
</reference>
<sequence length="321" mass="34674">MRTVKVFEEAWPLHTPFVIARGSRSEARVVVVELEEEGIKGTGECTPYPRYGESDASVMAQIMSVVPQLEKGLTREELQKILPAGAARNALDCALWDLAARRQQQSLADLIGITLPETVITAQTVVIGTPDQMANSASTLWQAGAKLLKVKLDNHLISERMVAIRTAVPDATLIVDANESWRAEGLAARCQLLADLGVAMLEQPLPAQDDAALENFIHPLPICADESCHTRSNLKALKGRYEMVNIKLDKTGGLTEALALATEARAQGFSLMLGCMLCTSRAISAALPLVPQVSFADLDGPTWLAVDVEPALQFTTGELHL</sequence>
<name>AEEP_ECOLI</name>
<organism>
    <name type="scientific">Escherichia coli (strain K12)</name>
    <dbReference type="NCBI Taxonomy" id="83333"/>
    <lineage>
        <taxon>Bacteria</taxon>
        <taxon>Pseudomonadati</taxon>
        <taxon>Pseudomonadota</taxon>
        <taxon>Gammaproteobacteria</taxon>
        <taxon>Enterobacterales</taxon>
        <taxon>Enterobacteriaceae</taxon>
        <taxon>Escherichia</taxon>
    </lineage>
</organism>
<proteinExistence type="evidence at protein level"/>